<comment type="cofactor">
    <cofactor evidence="1">
        <name>pyridoxal 5'-phosphate</name>
        <dbReference type="ChEBI" id="CHEBI:597326"/>
    </cofactor>
</comment>
<comment type="similarity">
    <text evidence="2">Belongs to the class-I pyridoxal-phosphate-dependent aminotransferase family.</text>
</comment>
<comment type="sequence caution" evidence="2">
    <conflict type="erroneous gene model prediction">
        <sequence resource="EMBL-CDS" id="CAA23025"/>
    </conflict>
</comment>
<comment type="sequence caution" evidence="2">
    <conflict type="erroneous gene model prediction">
        <sequence resource="EMBL-CDS" id="CAB79314"/>
    </conflict>
</comment>
<protein>
    <recommendedName>
        <fullName>Probable aminotransferase TAT4</fullName>
        <ecNumber>2.6.1.-</ecNumber>
    </recommendedName>
    <alternativeName>
        <fullName>Tyrosine aminotransferase 4</fullName>
    </alternativeName>
</protein>
<reference key="1">
    <citation type="journal article" date="1999" name="Nature">
        <title>Sequence and analysis of chromosome 4 of the plant Arabidopsis thaliana.</title>
        <authorList>
            <person name="Mayer K.F.X."/>
            <person name="Schueller C."/>
            <person name="Wambutt R."/>
            <person name="Murphy G."/>
            <person name="Volckaert G."/>
            <person name="Pohl T."/>
            <person name="Duesterhoeft A."/>
            <person name="Stiekema W."/>
            <person name="Entian K.-D."/>
            <person name="Terryn N."/>
            <person name="Harris B."/>
            <person name="Ansorge W."/>
            <person name="Brandt P."/>
            <person name="Grivell L.A."/>
            <person name="Rieger M."/>
            <person name="Weichselgartner M."/>
            <person name="de Simone V."/>
            <person name="Obermaier B."/>
            <person name="Mache R."/>
            <person name="Mueller M."/>
            <person name="Kreis M."/>
            <person name="Delseny M."/>
            <person name="Puigdomenech P."/>
            <person name="Watson M."/>
            <person name="Schmidtheini T."/>
            <person name="Reichert B."/>
            <person name="Portetelle D."/>
            <person name="Perez-Alonso M."/>
            <person name="Boutry M."/>
            <person name="Bancroft I."/>
            <person name="Vos P."/>
            <person name="Hoheisel J."/>
            <person name="Zimmermann W."/>
            <person name="Wedler H."/>
            <person name="Ridley P."/>
            <person name="Langham S.-A."/>
            <person name="McCullagh B."/>
            <person name="Bilham L."/>
            <person name="Robben J."/>
            <person name="van der Schueren J."/>
            <person name="Grymonprez B."/>
            <person name="Chuang Y.-J."/>
            <person name="Vandenbussche F."/>
            <person name="Braeken M."/>
            <person name="Weltjens I."/>
            <person name="Voet M."/>
            <person name="Bastiaens I."/>
            <person name="Aert R."/>
            <person name="Defoor E."/>
            <person name="Weitzenegger T."/>
            <person name="Bothe G."/>
            <person name="Ramsperger U."/>
            <person name="Hilbert H."/>
            <person name="Braun M."/>
            <person name="Holzer E."/>
            <person name="Brandt A."/>
            <person name="Peters S."/>
            <person name="van Staveren M."/>
            <person name="Dirkse W."/>
            <person name="Mooijman P."/>
            <person name="Klein Lankhorst R."/>
            <person name="Rose M."/>
            <person name="Hauf J."/>
            <person name="Koetter P."/>
            <person name="Berneiser S."/>
            <person name="Hempel S."/>
            <person name="Feldpausch M."/>
            <person name="Lamberth S."/>
            <person name="Van den Daele H."/>
            <person name="De Keyser A."/>
            <person name="Buysshaert C."/>
            <person name="Gielen J."/>
            <person name="Villarroel R."/>
            <person name="De Clercq R."/>
            <person name="van Montagu M."/>
            <person name="Rogers J."/>
            <person name="Cronin A."/>
            <person name="Quail M.A."/>
            <person name="Bray-Allen S."/>
            <person name="Clark L."/>
            <person name="Doggett J."/>
            <person name="Hall S."/>
            <person name="Kay M."/>
            <person name="Lennard N."/>
            <person name="McLay K."/>
            <person name="Mayes R."/>
            <person name="Pettett A."/>
            <person name="Rajandream M.A."/>
            <person name="Lyne M."/>
            <person name="Benes V."/>
            <person name="Rechmann S."/>
            <person name="Borkova D."/>
            <person name="Bloecker H."/>
            <person name="Scharfe M."/>
            <person name="Grimm M."/>
            <person name="Loehnert T.-H."/>
            <person name="Dose S."/>
            <person name="de Haan M."/>
            <person name="Maarse A.C."/>
            <person name="Schaefer M."/>
            <person name="Mueller-Auer S."/>
            <person name="Gabel C."/>
            <person name="Fuchs M."/>
            <person name="Fartmann B."/>
            <person name="Granderath K."/>
            <person name="Dauner D."/>
            <person name="Herzl A."/>
            <person name="Neumann S."/>
            <person name="Argiriou A."/>
            <person name="Vitale D."/>
            <person name="Liguori R."/>
            <person name="Piravandi E."/>
            <person name="Massenet O."/>
            <person name="Quigley F."/>
            <person name="Clabauld G."/>
            <person name="Muendlein A."/>
            <person name="Felber R."/>
            <person name="Schnabl S."/>
            <person name="Hiller R."/>
            <person name="Schmidt W."/>
            <person name="Lecharny A."/>
            <person name="Aubourg S."/>
            <person name="Chefdor F."/>
            <person name="Cooke R."/>
            <person name="Berger C."/>
            <person name="Monfort A."/>
            <person name="Casacuberta E."/>
            <person name="Gibbons T."/>
            <person name="Weber N."/>
            <person name="Vandenbol M."/>
            <person name="Bargues M."/>
            <person name="Terol J."/>
            <person name="Torres A."/>
            <person name="Perez-Perez A."/>
            <person name="Purnelle B."/>
            <person name="Bent E."/>
            <person name="Johnson S."/>
            <person name="Tacon D."/>
            <person name="Jesse T."/>
            <person name="Heijnen L."/>
            <person name="Schwarz S."/>
            <person name="Scholler P."/>
            <person name="Heber S."/>
            <person name="Francs P."/>
            <person name="Bielke C."/>
            <person name="Frishman D."/>
            <person name="Haase D."/>
            <person name="Lemcke K."/>
            <person name="Mewes H.-W."/>
            <person name="Stocker S."/>
            <person name="Zaccaria P."/>
            <person name="Bevan M."/>
            <person name="Wilson R.K."/>
            <person name="de la Bastide M."/>
            <person name="Habermann K."/>
            <person name="Parnell L."/>
            <person name="Dedhia N."/>
            <person name="Gnoj L."/>
            <person name="Schutz K."/>
            <person name="Huang E."/>
            <person name="Spiegel L."/>
            <person name="Sekhon M."/>
            <person name="Murray J."/>
            <person name="Sheet P."/>
            <person name="Cordes M."/>
            <person name="Abu-Threideh J."/>
            <person name="Stoneking T."/>
            <person name="Kalicki J."/>
            <person name="Graves T."/>
            <person name="Harmon G."/>
            <person name="Edwards J."/>
            <person name="Latreille P."/>
            <person name="Courtney L."/>
            <person name="Cloud J."/>
            <person name="Abbott A."/>
            <person name="Scott K."/>
            <person name="Johnson D."/>
            <person name="Minx P."/>
            <person name="Bentley D."/>
            <person name="Fulton B."/>
            <person name="Miller N."/>
            <person name="Greco T."/>
            <person name="Kemp K."/>
            <person name="Kramer J."/>
            <person name="Fulton L."/>
            <person name="Mardis E."/>
            <person name="Dante M."/>
            <person name="Pepin K."/>
            <person name="Hillier L.W."/>
            <person name="Nelson J."/>
            <person name="Spieth J."/>
            <person name="Ryan E."/>
            <person name="Andrews S."/>
            <person name="Geisel C."/>
            <person name="Layman D."/>
            <person name="Du H."/>
            <person name="Ali J."/>
            <person name="Berghoff A."/>
            <person name="Jones K."/>
            <person name="Drone K."/>
            <person name="Cotton M."/>
            <person name="Joshu C."/>
            <person name="Antonoiu B."/>
            <person name="Zidanic M."/>
            <person name="Strong C."/>
            <person name="Sun H."/>
            <person name="Lamar B."/>
            <person name="Yordan C."/>
            <person name="Ma P."/>
            <person name="Zhong J."/>
            <person name="Preston R."/>
            <person name="Vil D."/>
            <person name="Shekher M."/>
            <person name="Matero A."/>
            <person name="Shah R."/>
            <person name="Swaby I.K."/>
            <person name="O'Shaughnessy A."/>
            <person name="Rodriguez M."/>
            <person name="Hoffman J."/>
            <person name="Till S."/>
            <person name="Granat S."/>
            <person name="Shohdy N."/>
            <person name="Hasegawa A."/>
            <person name="Hameed A."/>
            <person name="Lodhi M."/>
            <person name="Johnson A."/>
            <person name="Chen E."/>
            <person name="Marra M.A."/>
            <person name="Martienssen R."/>
            <person name="McCombie W.R."/>
        </authorList>
    </citation>
    <scope>NUCLEOTIDE SEQUENCE [LARGE SCALE GENOMIC DNA]</scope>
    <source>
        <strain>cv. Columbia</strain>
    </source>
</reference>
<reference key="2">
    <citation type="journal article" date="2017" name="Plant J.">
        <title>Araport11: a complete reannotation of the Arabidopsis thaliana reference genome.</title>
        <authorList>
            <person name="Cheng C.Y."/>
            <person name="Krishnakumar V."/>
            <person name="Chan A.P."/>
            <person name="Thibaud-Nissen F."/>
            <person name="Schobel S."/>
            <person name="Town C.D."/>
        </authorList>
    </citation>
    <scope>GENOME REANNOTATION</scope>
    <source>
        <strain>cv. Columbia</strain>
    </source>
</reference>
<reference key="3">
    <citation type="journal article" date="2003" name="Science">
        <title>Empirical analysis of transcriptional activity in the Arabidopsis genome.</title>
        <authorList>
            <person name="Yamada K."/>
            <person name="Lim J."/>
            <person name="Dale J.M."/>
            <person name="Chen H."/>
            <person name="Shinn P."/>
            <person name="Palm C.J."/>
            <person name="Southwick A.M."/>
            <person name="Wu H.C."/>
            <person name="Kim C.J."/>
            <person name="Nguyen M."/>
            <person name="Pham P.K."/>
            <person name="Cheuk R.F."/>
            <person name="Karlin-Newmann G."/>
            <person name="Liu S.X."/>
            <person name="Lam B."/>
            <person name="Sakano H."/>
            <person name="Wu T."/>
            <person name="Yu G."/>
            <person name="Miranda M."/>
            <person name="Quach H.L."/>
            <person name="Tripp M."/>
            <person name="Chang C.H."/>
            <person name="Lee J.M."/>
            <person name="Toriumi M.J."/>
            <person name="Chan M.M."/>
            <person name="Tang C.C."/>
            <person name="Onodera C.S."/>
            <person name="Deng J.M."/>
            <person name="Akiyama K."/>
            <person name="Ansari Y."/>
            <person name="Arakawa T."/>
            <person name="Banh J."/>
            <person name="Banno F."/>
            <person name="Bowser L."/>
            <person name="Brooks S.Y."/>
            <person name="Carninci P."/>
            <person name="Chao Q."/>
            <person name="Choy N."/>
            <person name="Enju A."/>
            <person name="Goldsmith A.D."/>
            <person name="Gurjal M."/>
            <person name="Hansen N.F."/>
            <person name="Hayashizaki Y."/>
            <person name="Johnson-Hopson C."/>
            <person name="Hsuan V.W."/>
            <person name="Iida K."/>
            <person name="Karnes M."/>
            <person name="Khan S."/>
            <person name="Koesema E."/>
            <person name="Ishida J."/>
            <person name="Jiang P.X."/>
            <person name="Jones T."/>
            <person name="Kawai J."/>
            <person name="Kamiya A."/>
            <person name="Meyers C."/>
            <person name="Nakajima M."/>
            <person name="Narusaka M."/>
            <person name="Seki M."/>
            <person name="Sakurai T."/>
            <person name="Satou M."/>
            <person name="Tamse R."/>
            <person name="Vaysberg M."/>
            <person name="Wallender E.K."/>
            <person name="Wong C."/>
            <person name="Yamamura Y."/>
            <person name="Yuan S."/>
            <person name="Shinozaki K."/>
            <person name="Davis R.W."/>
            <person name="Theologis A."/>
            <person name="Ecker J.R."/>
        </authorList>
    </citation>
    <scope>NUCLEOTIDE SEQUENCE [LARGE SCALE MRNA]</scope>
    <source>
        <strain>cv. Columbia</strain>
    </source>
</reference>
<gene>
    <name type="ordered locus">At4g23590</name>
    <name type="ORF">F9D16.60</name>
</gene>
<organism>
    <name type="scientific">Arabidopsis thaliana</name>
    <name type="common">Mouse-ear cress</name>
    <dbReference type="NCBI Taxonomy" id="3702"/>
    <lineage>
        <taxon>Eukaryota</taxon>
        <taxon>Viridiplantae</taxon>
        <taxon>Streptophyta</taxon>
        <taxon>Embryophyta</taxon>
        <taxon>Tracheophyta</taxon>
        <taxon>Spermatophyta</taxon>
        <taxon>Magnoliopsida</taxon>
        <taxon>eudicotyledons</taxon>
        <taxon>Gunneridae</taxon>
        <taxon>Pentapetalae</taxon>
        <taxon>rosids</taxon>
        <taxon>malvids</taxon>
        <taxon>Brassicales</taxon>
        <taxon>Brassicaceae</taxon>
        <taxon>Camelineae</taxon>
        <taxon>Arabidopsis</taxon>
    </lineage>
</organism>
<dbReference type="EC" id="2.6.1.-"/>
<dbReference type="EMBL" id="AL035394">
    <property type="protein sequence ID" value="CAA23025.1"/>
    <property type="status" value="ALT_SEQ"/>
    <property type="molecule type" value="Genomic_DNA"/>
</dbReference>
<dbReference type="EMBL" id="AL161559">
    <property type="protein sequence ID" value="CAB79314.1"/>
    <property type="status" value="ALT_SEQ"/>
    <property type="molecule type" value="Genomic_DNA"/>
</dbReference>
<dbReference type="EMBL" id="CP002687">
    <property type="protein sequence ID" value="AEE84780.1"/>
    <property type="molecule type" value="Genomic_DNA"/>
</dbReference>
<dbReference type="EMBL" id="AY070389">
    <property type="protein sequence ID" value="AAL49885.1"/>
    <property type="molecule type" value="mRNA"/>
</dbReference>
<dbReference type="EMBL" id="AY123024">
    <property type="protein sequence ID" value="AAM67557.1"/>
    <property type="molecule type" value="mRNA"/>
</dbReference>
<dbReference type="PIR" id="T05591">
    <property type="entry name" value="T05591"/>
</dbReference>
<dbReference type="RefSeq" id="NP_194090.2">
    <property type="nucleotide sequence ID" value="NM_118490.4"/>
</dbReference>
<dbReference type="SMR" id="Q8VYP2"/>
<dbReference type="FunCoup" id="Q8VYP2">
    <property type="interactions" value="330"/>
</dbReference>
<dbReference type="STRING" id="3702.Q8VYP2"/>
<dbReference type="PaxDb" id="3702-AT4G23590.1"/>
<dbReference type="ProteomicsDB" id="234190"/>
<dbReference type="EnsemblPlants" id="AT4G23590.1">
    <property type="protein sequence ID" value="AT4G23590.1"/>
    <property type="gene ID" value="AT4G23590"/>
</dbReference>
<dbReference type="GeneID" id="828459"/>
<dbReference type="Gramene" id="AT4G23590.1">
    <property type="protein sequence ID" value="AT4G23590.1"/>
    <property type="gene ID" value="AT4G23590"/>
</dbReference>
<dbReference type="KEGG" id="ath:AT4G23590"/>
<dbReference type="Araport" id="AT4G23590"/>
<dbReference type="TAIR" id="AT4G23590"/>
<dbReference type="eggNOG" id="KOG0259">
    <property type="taxonomic scope" value="Eukaryota"/>
</dbReference>
<dbReference type="HOGENOM" id="CLU_017584_4_2_1"/>
<dbReference type="InParanoid" id="Q8VYP2"/>
<dbReference type="OMA" id="MKPESCT"/>
<dbReference type="PhylomeDB" id="Q8VYP2"/>
<dbReference type="PRO" id="PR:Q8VYP2"/>
<dbReference type="Proteomes" id="UP000006548">
    <property type="component" value="Chromosome 4"/>
</dbReference>
<dbReference type="ExpressionAtlas" id="Q8VYP2">
    <property type="expression patterns" value="baseline and differential"/>
</dbReference>
<dbReference type="GO" id="GO:0030170">
    <property type="term" value="F:pyridoxal phosphate binding"/>
    <property type="evidence" value="ECO:0007669"/>
    <property type="project" value="InterPro"/>
</dbReference>
<dbReference type="GO" id="GO:0008483">
    <property type="term" value="F:transaminase activity"/>
    <property type="evidence" value="ECO:0007669"/>
    <property type="project" value="UniProtKB-KW"/>
</dbReference>
<dbReference type="GO" id="GO:0006520">
    <property type="term" value="P:amino acid metabolic process"/>
    <property type="evidence" value="ECO:0007669"/>
    <property type="project" value="InterPro"/>
</dbReference>
<dbReference type="GO" id="GO:0009058">
    <property type="term" value="P:biosynthetic process"/>
    <property type="evidence" value="ECO:0007669"/>
    <property type="project" value="InterPro"/>
</dbReference>
<dbReference type="CDD" id="cd00609">
    <property type="entry name" value="AAT_like"/>
    <property type="match status" value="1"/>
</dbReference>
<dbReference type="FunFam" id="3.40.640.10:FF:000048">
    <property type="entry name" value="tyrosine aminotransferase"/>
    <property type="match status" value="1"/>
</dbReference>
<dbReference type="Gene3D" id="3.90.1150.10">
    <property type="entry name" value="Aspartate Aminotransferase, domain 1"/>
    <property type="match status" value="1"/>
</dbReference>
<dbReference type="Gene3D" id="3.40.640.10">
    <property type="entry name" value="Type I PLP-dependent aspartate aminotransferase-like (Major domain)"/>
    <property type="match status" value="1"/>
</dbReference>
<dbReference type="InterPro" id="IPR004839">
    <property type="entry name" value="Aminotransferase_I/II_large"/>
</dbReference>
<dbReference type="InterPro" id="IPR015424">
    <property type="entry name" value="PyrdxlP-dep_Trfase"/>
</dbReference>
<dbReference type="InterPro" id="IPR015421">
    <property type="entry name" value="PyrdxlP-dep_Trfase_major"/>
</dbReference>
<dbReference type="InterPro" id="IPR015422">
    <property type="entry name" value="PyrdxlP-dep_Trfase_small"/>
</dbReference>
<dbReference type="InterPro" id="IPR005958">
    <property type="entry name" value="TyrNic_aminoTrfase"/>
</dbReference>
<dbReference type="NCBIfam" id="TIGR01265">
    <property type="entry name" value="tyr_nico_aTase"/>
    <property type="match status" value="1"/>
</dbReference>
<dbReference type="PANTHER" id="PTHR45744:SF10">
    <property type="entry name" value="CYSTINE LYASE CORI3-RELATED"/>
    <property type="match status" value="1"/>
</dbReference>
<dbReference type="PANTHER" id="PTHR45744">
    <property type="entry name" value="TYROSINE AMINOTRANSFERASE"/>
    <property type="match status" value="1"/>
</dbReference>
<dbReference type="Pfam" id="PF00155">
    <property type="entry name" value="Aminotran_1_2"/>
    <property type="match status" value="1"/>
</dbReference>
<dbReference type="PIRSF" id="PIRSF000517">
    <property type="entry name" value="Tyr_transaminase"/>
    <property type="match status" value="1"/>
</dbReference>
<dbReference type="SUPFAM" id="SSF53383">
    <property type="entry name" value="PLP-dependent transferases"/>
    <property type="match status" value="1"/>
</dbReference>
<proteinExistence type="evidence at transcript level"/>
<sequence length="424" mass="47494">MASQGCVDWQFSGSDAAEKAAQASLGTYSSEIFSLCDPQGKPILPPLSEEAETSHTAEKAVVKAVLCGTGNAYAPSIGLPVAKRAVAEYLNRDLDNKLTGDDVYMTVGCKQAIELAVSILAKPKANILLPRPGFPWDMVHSIYKHLEVRRYEFIPERDFEIDFNSVREMVDENTFAIFIINPHNPNGNYYTEAHLKQLATLARELGIMVVSDEVYRWSVFGSNPFVPMGKFSSIVPVITLGSISKGWIVPGWRTGWLALHDLNGVFRSTKVLKAAKEFLEITSKPPTVIQAAIPTILEKTPQDFFEKRGIFLKDKVDFGYSKLKNIPTLTCYMKPESCTFLWTKLDPLHFVDIEDDHDFCRKLAKEENLVVLPGIAFGQNNWLRHSIDMETPRLEDAFERLKSFCERHSVIVEASSLKDVNGVN</sequence>
<name>TAT4_ARATH</name>
<keyword id="KW-0032">Aminotransferase</keyword>
<keyword id="KW-0663">Pyridoxal phosphate</keyword>
<keyword id="KW-1185">Reference proteome</keyword>
<keyword id="KW-0808">Transferase</keyword>
<accession>Q8VYP2</accession>
<accession>Q9SUR7</accession>
<feature type="chain" id="PRO_0000412728" description="Probable aminotransferase TAT4">
    <location>
        <begin position="1"/>
        <end position="424"/>
    </location>
</feature>
<evidence type="ECO:0000250" key="1"/>
<evidence type="ECO:0000305" key="2"/>